<evidence type="ECO:0000250" key="1"/>
<evidence type="ECO:0000250" key="2">
    <source>
        <dbReference type="UniProtKB" id="P49268"/>
    </source>
</evidence>
<evidence type="ECO:0000255" key="3"/>
<evidence type="ECO:0000303" key="4">
    <source>
    </source>
</evidence>
<evidence type="ECO:0000305" key="5"/>
<sequence>MRYQTVFWILLIALCTVNPAKIQDVASYGGTVRLTDSGRAKCSRKTWPCETSEDCCDKNCSDTFWTCQLGYGCSRVCV</sequence>
<proteinExistence type="evidence at transcript level"/>
<keyword id="KW-1015">Disulfide bond</keyword>
<keyword id="KW-0872">Ion channel impairing toxin</keyword>
<keyword id="KW-0960">Knottin</keyword>
<keyword id="KW-0964">Secreted</keyword>
<keyword id="KW-0732">Signal</keyword>
<keyword id="KW-0800">Toxin</keyword>
<dbReference type="EMBL" id="EU233911">
    <property type="protein sequence ID" value="ABY71730.1"/>
    <property type="molecule type" value="mRNA"/>
</dbReference>
<dbReference type="SMR" id="B1P1I0"/>
<dbReference type="TCDB" id="8.B.21.1.2">
    <property type="family name" value="the spider insecticidal neurotoxin cyrtautoxin (cyrautoxin) family"/>
</dbReference>
<dbReference type="ArachnoServer" id="AS000859">
    <property type="toxin name" value="U29-theraphotoxin-Cg1a"/>
</dbReference>
<dbReference type="GO" id="GO:0005576">
    <property type="term" value="C:extracellular region"/>
    <property type="evidence" value="ECO:0007669"/>
    <property type="project" value="UniProtKB-SubCell"/>
</dbReference>
<dbReference type="GO" id="GO:0099106">
    <property type="term" value="F:ion channel regulator activity"/>
    <property type="evidence" value="ECO:0007669"/>
    <property type="project" value="UniProtKB-KW"/>
</dbReference>
<dbReference type="GO" id="GO:0090729">
    <property type="term" value="F:toxin activity"/>
    <property type="evidence" value="ECO:0007669"/>
    <property type="project" value="UniProtKB-KW"/>
</dbReference>
<dbReference type="InterPro" id="IPR012626">
    <property type="entry name" value="Spider_insecticidal_peptide"/>
</dbReference>
<dbReference type="Pfam" id="PF08091">
    <property type="entry name" value="Toxin_21"/>
    <property type="match status" value="1"/>
</dbReference>
<reference key="1">
    <citation type="journal article" date="2008" name="Cell. Mol. Life Sci.">
        <title>Molecular diversity and evolution of cystine knot toxins of the tarantula Chilobrachys jingzhao.</title>
        <authorList>
            <person name="Chen J."/>
            <person name="Deng M."/>
            <person name="He Q."/>
            <person name="Meng E."/>
            <person name="Jiang L."/>
            <person name="Liao Z."/>
            <person name="Rong M."/>
            <person name="Liang S."/>
        </authorList>
    </citation>
    <scope>NUCLEOTIDE SEQUENCE [LARGE SCALE MRNA]</scope>
    <source>
        <tissue>Venom gland</tissue>
    </source>
</reference>
<organism>
    <name type="scientific">Chilobrachys guangxiensis</name>
    <name type="common">Chinese earth tiger tarantula</name>
    <name type="synonym">Chilobrachys jingzhao</name>
    <dbReference type="NCBI Taxonomy" id="278060"/>
    <lineage>
        <taxon>Eukaryota</taxon>
        <taxon>Metazoa</taxon>
        <taxon>Ecdysozoa</taxon>
        <taxon>Arthropoda</taxon>
        <taxon>Chelicerata</taxon>
        <taxon>Arachnida</taxon>
        <taxon>Araneae</taxon>
        <taxon>Mygalomorphae</taxon>
        <taxon>Theraphosidae</taxon>
        <taxon>Chilobrachys</taxon>
    </lineage>
</organism>
<protein>
    <recommendedName>
        <fullName>U29-theraphotoxin-Cg1a</fullName>
        <shortName>U29-TRTX-Cg1a</shortName>
    </recommendedName>
    <alternativeName>
        <fullName evidence="4">Jingzhaotoxin-59</fullName>
        <shortName evidence="4">JZTX-59</shortName>
    </alternativeName>
</protein>
<name>JZT59_CHIGU</name>
<accession>B1P1I0</accession>
<feature type="signal peptide" evidence="3">
    <location>
        <begin position="1"/>
        <end position="19"/>
    </location>
</feature>
<feature type="propeptide" id="PRO_0000398532" evidence="1">
    <location>
        <begin position="20"/>
        <end status="unknown"/>
    </location>
</feature>
<feature type="peptide" id="PRO_0000398533" description="U29-theraphotoxin-Cg1a">
    <location>
        <begin status="unknown"/>
        <end position="78"/>
    </location>
</feature>
<feature type="disulfide bond" evidence="2">
    <location>
        <begin position="42"/>
        <end position="56"/>
    </location>
</feature>
<feature type="disulfide bond" evidence="2">
    <location>
        <begin position="49"/>
        <end position="60"/>
    </location>
</feature>
<feature type="disulfide bond" evidence="2">
    <location>
        <begin position="55"/>
        <end position="77"/>
    </location>
</feature>
<feature type="disulfide bond" evidence="2">
    <location>
        <begin position="67"/>
        <end position="73"/>
    </location>
</feature>
<comment type="function">
    <text>Probable ion channel inhibitor.</text>
</comment>
<comment type="subcellular location">
    <subcellularLocation>
        <location evidence="1">Secreted</location>
    </subcellularLocation>
</comment>
<comment type="tissue specificity">
    <text>Expressed by the venom gland.</text>
</comment>
<comment type="domain">
    <text evidence="1">The presence of a 'disulfide through disulfide knot' structurally defines this protein as a knottin.</text>
</comment>
<comment type="similarity">
    <text evidence="5">Belongs to the neurotoxin 13 (insecticidal toxin ABC) family. 03 (JZTX-59) subfamily.</text>
</comment>